<protein>
    <recommendedName>
        <fullName evidence="10">Meiotic recombination protein DMC1 homolog</fullName>
        <shortName evidence="8">AtDMC1</shortName>
    </recommendedName>
</protein>
<keyword id="KW-0067">ATP-binding</keyword>
<keyword id="KW-0131">Cell cycle</keyword>
<keyword id="KW-0238">DNA-binding</keyword>
<keyword id="KW-0469">Meiosis</keyword>
<keyword id="KW-0547">Nucleotide-binding</keyword>
<keyword id="KW-0539">Nucleus</keyword>
<keyword id="KW-1185">Reference proteome</keyword>
<sequence>MMASLKAEETSQMQLVEREENDEDEDLFEMIDKLIAQGINAGDVKKLQEAGIHTCNGLMMHTKKNLTGIKGLSEAKVDKICEAAEKIVNFGYMTGSDALIKRKSVVKITTGCQALDDLLGGGIETSAITEAFGEFRSGKTQLAHTLCVTTQLPTNMKGGNGKVAYIDTEGTFRPDRIVPIAERFGMDPGAVLDNIIYARAYTYEHQYNLLLGLAAKMSEEPFRILIVDSIIALFRVDFTGRGELADRQQKLAQMLSRLIKIAEEFNVAVYMTNQVIADPGGGMFISDPKKPAGGHVLAHAATIRLLFRKGKGDTRVCKVYDAPNLAEAEASFQITQGGIADAKD</sequence>
<proteinExistence type="evidence at protein level"/>
<accession>Q39009</accession>
<accession>P93001</accession>
<accession>Q4V3A9</accession>
<accession>Q9LIL0</accession>
<evidence type="ECO:0000250" key="1">
    <source>
        <dbReference type="UniProtKB" id="Q14565"/>
    </source>
</evidence>
<evidence type="ECO:0000256" key="2">
    <source>
        <dbReference type="SAM" id="MobiDB-lite"/>
    </source>
</evidence>
<evidence type="ECO:0000269" key="3">
    <source>
    </source>
</evidence>
<evidence type="ECO:0000269" key="4">
    <source>
    </source>
</evidence>
<evidence type="ECO:0000269" key="5">
    <source>
    </source>
</evidence>
<evidence type="ECO:0000269" key="6">
    <source>
    </source>
</evidence>
<evidence type="ECO:0000269" key="7">
    <source>
    </source>
</evidence>
<evidence type="ECO:0000303" key="8">
    <source>
    </source>
</evidence>
<evidence type="ECO:0000303" key="9">
    <source>
    </source>
</evidence>
<evidence type="ECO:0000305" key="10"/>
<reference key="1">
    <citation type="journal article" date="1995" name="DNA Res.">
        <title>Structural analysis of a recA-like gene in the genome of Arabidopsis thaliana.</title>
        <authorList>
            <person name="Sato S."/>
            <person name="Hotta Y."/>
            <person name="Tabata S."/>
        </authorList>
    </citation>
    <scope>NUCLEOTIDE SEQUENCE [GENOMIC DNA]</scope>
</reference>
<reference key="2">
    <citation type="journal article" date="1997" name="Plant J.">
        <title>AtDMC1, the Arabidopsis homologue of the yeast DMC1 gene: characterization, transposon-induced allelic variation and meiosis-associated expression.</title>
        <authorList>
            <person name="Klimyuk V.I."/>
            <person name="Jones J.D.G."/>
        </authorList>
    </citation>
    <scope>NUCLEOTIDE SEQUENCE [GENOMIC DNA]</scope>
    <source>
        <strain>cv. Landsberg erecta</strain>
    </source>
</reference>
<reference key="3">
    <citation type="journal article" date="2000" name="DNA Res.">
        <title>Structural analysis of Arabidopsis thaliana chromosome 3. II. Sequence features of the 4,251,695 bp regions covered by 90 P1, TAC and BAC clones.</title>
        <authorList>
            <person name="Kaneko T."/>
            <person name="Katoh T."/>
            <person name="Sato S."/>
            <person name="Nakamura Y."/>
            <person name="Asamizu E."/>
            <person name="Tabata S."/>
        </authorList>
    </citation>
    <scope>NUCLEOTIDE SEQUENCE [LARGE SCALE GENOMIC DNA]</scope>
    <source>
        <strain>cv. Columbia</strain>
    </source>
</reference>
<reference key="4">
    <citation type="journal article" date="2017" name="Plant J.">
        <title>Araport11: a complete reannotation of the Arabidopsis thaliana reference genome.</title>
        <authorList>
            <person name="Cheng C.Y."/>
            <person name="Krishnakumar V."/>
            <person name="Chan A.P."/>
            <person name="Thibaud-Nissen F."/>
            <person name="Schobel S."/>
            <person name="Town C.D."/>
        </authorList>
    </citation>
    <scope>GENOME REANNOTATION</scope>
    <source>
        <strain>cv. Columbia</strain>
    </source>
</reference>
<reference key="5">
    <citation type="submission" date="2005-05" db="EMBL/GenBank/DDBJ databases">
        <title>Arabidopsis ORF clones.</title>
        <authorList>
            <person name="Cheuk R.F."/>
            <person name="Chen H."/>
            <person name="Kim C.J."/>
            <person name="Shinn P."/>
            <person name="Ecker J.R."/>
        </authorList>
    </citation>
    <scope>NUCLEOTIDE SEQUENCE [LARGE SCALE MRNA]</scope>
    <source>
        <strain>cv. Columbia</strain>
    </source>
</reference>
<reference key="6">
    <citation type="journal article" date="1998" name="Mol. Gen. Genet.">
        <title>Isolation and characterisation of the RAD51 and DMC1 homologs from Arabidopsis thaliana.</title>
        <authorList>
            <person name="Doutriaux M.P."/>
            <person name="Couteau F."/>
            <person name="Bergounioux C."/>
            <person name="White C."/>
        </authorList>
    </citation>
    <scope>DEVELOPMENTAL STAGE</scope>
    <scope>TISSUE SPECIFICITY</scope>
    <source>
        <strain>cv. Columbia</strain>
    </source>
</reference>
<reference key="7">
    <citation type="journal article" date="1999" name="Plant Cell">
        <title>Random chromosome segregation without meiotic arrest in both male and female meiocytes of a dmc1 mutant of Arabidopsis.</title>
        <authorList>
            <person name="Couteau F."/>
            <person name="Belzile F."/>
            <person name="Horlow C."/>
            <person name="Grandjean O."/>
            <person name="Vezon D."/>
            <person name="Doutriaux M.P."/>
        </authorList>
    </citation>
    <scope>FUNCTION</scope>
    <scope>DISRUPTION PHENOTYPE</scope>
</reference>
<reference key="8">
    <citation type="journal article" date="2006" name="Plant Physiol.">
        <title>Interaction between Arabidopsis Brca2 and its partners Rad51, Dmc1, and Dss1.</title>
        <authorList>
            <person name="Dray E."/>
            <person name="Siaud N."/>
            <person name="Dubois E."/>
            <person name="Doutriaux M.P."/>
        </authorList>
    </citation>
    <scope>INTERACTION WITH BRCA2A AND BRCA2B</scope>
</reference>
<reference key="9">
    <citation type="journal article" date="2007" name="Genes Dev.">
        <title>ASY1 mediates AtDMC1-dependent interhomolog recombination during meiosis in Arabidopsis.</title>
        <authorList>
            <person name="Sanchez-Moran E."/>
            <person name="Santos J.-L."/>
            <person name="Jones G.H."/>
            <person name="Franklin F.C."/>
        </authorList>
    </citation>
    <scope>FUNCTION</scope>
    <scope>SUBCELLULAR LOCATION</scope>
</reference>
<reference key="10">
    <citation type="journal article" date="2013" name="PLoS Genet.">
        <title>MCM8 is required for a pathway of meiotic double-strand break repair independent of DMC1 in Arabidopsis thaliana.</title>
        <authorList>
            <person name="Crismani W."/>
            <person name="Portemer V."/>
            <person name="Froger N."/>
            <person name="Chelysheva L."/>
            <person name="Horlow C."/>
            <person name="Vrielynck N."/>
            <person name="Mercier R."/>
        </authorList>
    </citation>
    <scope>FUNCTION</scope>
    <scope>DISRUPTION PHENOTYPE</scope>
</reference>
<gene>
    <name evidence="9" type="primary">DMC1</name>
    <name type="synonym">LIM15</name>
    <name type="ordered locus">At3g22880</name>
    <name type="ORF">F5N5.6</name>
</gene>
<dbReference type="EMBL" id="D45415">
    <property type="protein sequence ID" value="BAA08255.1"/>
    <property type="status" value="ALT_SEQ"/>
    <property type="molecule type" value="Genomic_DNA"/>
</dbReference>
<dbReference type="EMBL" id="U76670">
    <property type="protein sequence ID" value="AAC49617.1"/>
    <property type="molecule type" value="Genomic_DNA"/>
</dbReference>
<dbReference type="EMBL" id="AP001300">
    <property type="protein sequence ID" value="BAB03033.1"/>
    <property type="status" value="ALT_SEQ"/>
    <property type="molecule type" value="Genomic_DNA"/>
</dbReference>
<dbReference type="EMBL" id="CP002686">
    <property type="protein sequence ID" value="AEE76687.1"/>
    <property type="molecule type" value="Genomic_DNA"/>
</dbReference>
<dbReference type="EMBL" id="BT023447">
    <property type="protein sequence ID" value="AAY56438.1"/>
    <property type="molecule type" value="mRNA"/>
</dbReference>
<dbReference type="PIR" id="JC4092">
    <property type="entry name" value="JC4092"/>
</dbReference>
<dbReference type="RefSeq" id="NP_188928.2">
    <property type="nucleotide sequence ID" value="NM_113188.3"/>
</dbReference>
<dbReference type="SMR" id="Q39009"/>
<dbReference type="BioGRID" id="7192">
    <property type="interactions" value="8"/>
</dbReference>
<dbReference type="FunCoup" id="Q39009">
    <property type="interactions" value="244"/>
</dbReference>
<dbReference type="IntAct" id="Q39009">
    <property type="interactions" value="7"/>
</dbReference>
<dbReference type="STRING" id="3702.Q39009"/>
<dbReference type="PaxDb" id="3702-AT3G22880.1"/>
<dbReference type="ProteomicsDB" id="222219"/>
<dbReference type="EnsemblPlants" id="AT3G22880.1">
    <property type="protein sequence ID" value="AT3G22880.1"/>
    <property type="gene ID" value="AT3G22880"/>
</dbReference>
<dbReference type="GeneID" id="821860"/>
<dbReference type="Gramene" id="AT3G22880.1">
    <property type="protein sequence ID" value="AT3G22880.1"/>
    <property type="gene ID" value="AT3G22880"/>
</dbReference>
<dbReference type="KEGG" id="ath:AT3G22880"/>
<dbReference type="Araport" id="AT3G22880"/>
<dbReference type="TAIR" id="AT3G22880">
    <property type="gene designation" value="DMC1"/>
</dbReference>
<dbReference type="eggNOG" id="KOG1434">
    <property type="taxonomic scope" value="Eukaryota"/>
</dbReference>
<dbReference type="HOGENOM" id="CLU_041732_0_1_1"/>
<dbReference type="InParanoid" id="Q39009"/>
<dbReference type="OMA" id="LEVCTRR"/>
<dbReference type="PhylomeDB" id="Q39009"/>
<dbReference type="PRO" id="PR:Q39009"/>
<dbReference type="Proteomes" id="UP000006548">
    <property type="component" value="Chromosome 3"/>
</dbReference>
<dbReference type="ExpressionAtlas" id="Q39009">
    <property type="expression patterns" value="baseline and differential"/>
</dbReference>
<dbReference type="GO" id="GO:0005634">
    <property type="term" value="C:nucleus"/>
    <property type="evidence" value="ECO:0000314"/>
    <property type="project" value="UniProtKB"/>
</dbReference>
<dbReference type="GO" id="GO:0005524">
    <property type="term" value="F:ATP binding"/>
    <property type="evidence" value="ECO:0007669"/>
    <property type="project" value="UniProtKB-KW"/>
</dbReference>
<dbReference type="GO" id="GO:0016887">
    <property type="term" value="F:ATP hydrolysis activity"/>
    <property type="evidence" value="ECO:0007669"/>
    <property type="project" value="InterPro"/>
</dbReference>
<dbReference type="GO" id="GO:0140664">
    <property type="term" value="F:ATP-dependent DNA damage sensor activity"/>
    <property type="evidence" value="ECO:0007669"/>
    <property type="project" value="InterPro"/>
</dbReference>
<dbReference type="GO" id="GO:0003677">
    <property type="term" value="F:DNA binding"/>
    <property type="evidence" value="ECO:0007669"/>
    <property type="project" value="UniProtKB-KW"/>
</dbReference>
<dbReference type="GO" id="GO:0000150">
    <property type="term" value="F:DNA strand exchange activity"/>
    <property type="evidence" value="ECO:0007669"/>
    <property type="project" value="InterPro"/>
</dbReference>
<dbReference type="GO" id="GO:0051026">
    <property type="term" value="P:chiasma assembly"/>
    <property type="evidence" value="ECO:0000315"/>
    <property type="project" value="TAIR"/>
</dbReference>
<dbReference type="GO" id="GO:0006259">
    <property type="term" value="P:DNA metabolic process"/>
    <property type="evidence" value="ECO:0000314"/>
    <property type="project" value="TAIR"/>
</dbReference>
<dbReference type="GO" id="GO:0006281">
    <property type="term" value="P:DNA repair"/>
    <property type="evidence" value="ECO:0007669"/>
    <property type="project" value="InterPro"/>
</dbReference>
<dbReference type="GO" id="GO:0051321">
    <property type="term" value="P:meiotic cell cycle"/>
    <property type="evidence" value="ECO:0000304"/>
    <property type="project" value="TAIR"/>
</dbReference>
<dbReference type="CDD" id="cd19514">
    <property type="entry name" value="DMC1"/>
    <property type="match status" value="1"/>
</dbReference>
<dbReference type="FunFam" id="3.40.50.300:FF:000239">
    <property type="entry name" value="Meiotic recombination protein DMC1"/>
    <property type="match status" value="1"/>
</dbReference>
<dbReference type="FunFam" id="1.10.150.20:FF:000043">
    <property type="entry name" value="Meiotic recombination protein DMC1 homolog"/>
    <property type="match status" value="1"/>
</dbReference>
<dbReference type="Gene3D" id="1.10.150.20">
    <property type="entry name" value="5' to 3' exonuclease, C-terminal subdomain"/>
    <property type="match status" value="1"/>
</dbReference>
<dbReference type="Gene3D" id="3.40.50.300">
    <property type="entry name" value="P-loop containing nucleotide triphosphate hydrolases"/>
    <property type="match status" value="1"/>
</dbReference>
<dbReference type="InterPro" id="IPR003593">
    <property type="entry name" value="AAA+_ATPase"/>
</dbReference>
<dbReference type="InterPro" id="IPR011940">
    <property type="entry name" value="Dmc1"/>
</dbReference>
<dbReference type="InterPro" id="IPR013632">
    <property type="entry name" value="DNA_recomb/repair_Rad51_C"/>
</dbReference>
<dbReference type="InterPro" id="IPR016467">
    <property type="entry name" value="DNA_recomb/repair_RecA-like"/>
</dbReference>
<dbReference type="InterPro" id="IPR010995">
    <property type="entry name" value="DNA_repair_Rad51/TF_NusA_a-hlx"/>
</dbReference>
<dbReference type="InterPro" id="IPR027417">
    <property type="entry name" value="P-loop_NTPase"/>
</dbReference>
<dbReference type="InterPro" id="IPR020588">
    <property type="entry name" value="RecA_ATP-bd"/>
</dbReference>
<dbReference type="InterPro" id="IPR020587">
    <property type="entry name" value="RecA_monomer-monomer_interface"/>
</dbReference>
<dbReference type="NCBIfam" id="NF003301">
    <property type="entry name" value="PRK04301.1"/>
    <property type="match status" value="1"/>
</dbReference>
<dbReference type="NCBIfam" id="TIGR02238">
    <property type="entry name" value="recomb_DMC1"/>
    <property type="match status" value="1"/>
</dbReference>
<dbReference type="PANTHER" id="PTHR22942:SF30">
    <property type="entry name" value="MEIOTIC RECOMBINATION PROTEIN DMC1_LIM15 HOMOLOG"/>
    <property type="match status" value="1"/>
</dbReference>
<dbReference type="PANTHER" id="PTHR22942">
    <property type="entry name" value="RECA/RAD51/RADA DNA STRAND-PAIRING FAMILY MEMBER"/>
    <property type="match status" value="1"/>
</dbReference>
<dbReference type="Pfam" id="PF08423">
    <property type="entry name" value="Rad51"/>
    <property type="match status" value="1"/>
</dbReference>
<dbReference type="PIRSF" id="PIRSF005856">
    <property type="entry name" value="Rad51"/>
    <property type="match status" value="1"/>
</dbReference>
<dbReference type="SMART" id="SM00382">
    <property type="entry name" value="AAA"/>
    <property type="match status" value="1"/>
</dbReference>
<dbReference type="SUPFAM" id="SSF52540">
    <property type="entry name" value="P-loop containing nucleoside triphosphate hydrolases"/>
    <property type="match status" value="1"/>
</dbReference>
<dbReference type="SUPFAM" id="SSF47794">
    <property type="entry name" value="Rad51 N-terminal domain-like"/>
    <property type="match status" value="1"/>
</dbReference>
<dbReference type="PROSITE" id="PS50162">
    <property type="entry name" value="RECA_2"/>
    <property type="match status" value="1"/>
</dbReference>
<dbReference type="PROSITE" id="PS50163">
    <property type="entry name" value="RECA_3"/>
    <property type="match status" value="1"/>
</dbReference>
<comment type="function">
    <text evidence="3 5 6">May participate in meiotic recombination, specifically in homologous strand assimilation, which is required for the resolution of meiotic double-strand breaks (PubMed:10488231, PubMed:23300481). Mediates interhomolog recombination during meiosis (PubMed:17785529).</text>
</comment>
<comment type="subunit">
    <text evidence="1 4">Double stacked ring-shaped homooctamer (By similarity). Interacts with BRCA2A and BRCA2B (PubMed:16415210).</text>
</comment>
<comment type="interaction">
    <interactant intactId="EBI-307715">
        <id>Q39009</id>
    </interactant>
    <interactant intactId="EBI-1100687">
        <id>Q9ZNV8</id>
        <label>AHP2</label>
    </interactant>
    <organismsDiffer>false</organismsDiffer>
    <experiments>2</experiments>
</comment>
<comment type="interaction">
    <interactant intactId="EBI-307715">
        <id>Q39009</id>
    </interactant>
    <interactant intactId="EBI-307680">
        <id>Q7Y1C5</id>
        <label>BRCA2A</label>
    </interactant>
    <organismsDiffer>false</organismsDiffer>
    <experiments>4</experiments>
</comment>
<comment type="interaction">
    <interactant intactId="EBI-307715">
        <id>Q39009</id>
    </interactant>
    <interactant intactId="EBI-307707">
        <id>Q7Y1C4</id>
        <label>BRCA2B</label>
    </interactant>
    <organismsDiffer>false</organismsDiffer>
    <experiments>6</experiments>
</comment>
<comment type="interaction">
    <interactant intactId="EBI-307715">
        <id>Q39009</id>
    </interactant>
    <interactant intactId="EBI-1554720">
        <id>Q8GYD2</id>
        <label>MND1</label>
    </interactant>
    <organismsDiffer>false</organismsDiffer>
    <experiments>2</experiments>
</comment>
<comment type="interaction">
    <interactant intactId="EBI-307715">
        <id>Q39009</id>
    </interactant>
    <interactant intactId="EBI-307687">
        <id>P94102</id>
        <label>RAD51</label>
    </interactant>
    <organismsDiffer>false</organismsDiffer>
    <experiments>4</experiments>
</comment>
<comment type="subcellular location">
    <subcellularLocation>
        <location evidence="5">Nucleus</location>
    </subcellularLocation>
</comment>
<comment type="tissue specificity">
    <text evidence="7">Expressed in mitotic and/or meiotic tissues. Expressed in roots, leaves and anthers and carpels of young fower buds.</text>
</comment>
<comment type="developmental stage">
    <text evidence="7">Cell cycle regulated, peaking at the S phase. It is also expressed at high levels in exponentially growing cells in suspension cultures.</text>
</comment>
<comment type="disruption phenotype">
    <text evidence="3 6">Strongly reduced fertility and seed numbers due to defects in male and female gametogenesis.</text>
</comment>
<comment type="similarity">
    <text evidence="10">Belongs to the RecA family. DMC1 subfamily.</text>
</comment>
<comment type="sequence caution" evidence="10">
    <conflict type="erroneous gene model prediction">
        <sequence resource="EMBL-CDS" id="BAA08255"/>
    </conflict>
</comment>
<comment type="sequence caution" evidence="10">
    <conflict type="erroneous gene model prediction">
        <sequence resource="EMBL-CDS" id="BAB03033"/>
    </conflict>
</comment>
<name>DMC1_ARATH</name>
<feature type="chain" id="PRO_0000122920" description="Meiotic recombination protein DMC1 homolog">
    <location>
        <begin position="1"/>
        <end position="344"/>
    </location>
</feature>
<feature type="region of interest" description="Disordered" evidence="2">
    <location>
        <begin position="1"/>
        <end position="22"/>
    </location>
</feature>
<feature type="binding site" evidence="10">
    <location>
        <begin position="133"/>
        <end position="140"/>
    </location>
    <ligand>
        <name>ATP</name>
        <dbReference type="ChEBI" id="CHEBI:30616"/>
    </ligand>
</feature>
<feature type="binding site" evidence="1">
    <location>
        <position position="235"/>
    </location>
    <ligand>
        <name>dsDNA</name>
        <dbReference type="ChEBI" id="CHEBI:4705"/>
    </ligand>
</feature>
<feature type="binding site" evidence="1">
    <location>
        <position position="235"/>
    </location>
    <ligand>
        <name>ssDNA</name>
        <dbReference type="ChEBI" id="CHEBI:9160"/>
    </ligand>
</feature>
<feature type="binding site" evidence="1">
    <location>
        <position position="238"/>
    </location>
    <ligand>
        <name>ssDNA</name>
        <dbReference type="ChEBI" id="CHEBI:9160"/>
    </ligand>
</feature>
<feature type="binding site" evidence="1">
    <location>
        <position position="241"/>
    </location>
    <ligand>
        <name>dsDNA</name>
        <dbReference type="ChEBI" id="CHEBI:4705"/>
    </ligand>
</feature>
<feature type="binding site" evidence="1">
    <location>
        <position position="241"/>
    </location>
    <ligand>
        <name>ssDNA</name>
        <dbReference type="ChEBI" id="CHEBI:9160"/>
    </ligand>
</feature>
<feature type="binding site" evidence="1">
    <location>
        <position position="247"/>
    </location>
    <ligand>
        <name>dsDNA</name>
        <dbReference type="ChEBI" id="CHEBI:4705"/>
    </ligand>
</feature>
<feature type="binding site" evidence="1">
    <location>
        <position position="247"/>
    </location>
    <ligand>
        <name>ssDNA</name>
        <dbReference type="ChEBI" id="CHEBI:9160"/>
    </ligand>
</feature>
<feature type="binding site" evidence="1">
    <location>
        <position position="315"/>
    </location>
    <ligand>
        <name>ssDNA</name>
        <dbReference type="ChEBI" id="CHEBI:9160"/>
    </ligand>
</feature>
<feature type="sequence conflict" description="In Ref. 1; BAA08255." evidence="10" ref="1">
    <original>S</original>
    <variation>L</variation>
    <location>
        <position position="104"/>
    </location>
</feature>
<organism>
    <name type="scientific">Arabidopsis thaliana</name>
    <name type="common">Mouse-ear cress</name>
    <dbReference type="NCBI Taxonomy" id="3702"/>
    <lineage>
        <taxon>Eukaryota</taxon>
        <taxon>Viridiplantae</taxon>
        <taxon>Streptophyta</taxon>
        <taxon>Embryophyta</taxon>
        <taxon>Tracheophyta</taxon>
        <taxon>Spermatophyta</taxon>
        <taxon>Magnoliopsida</taxon>
        <taxon>eudicotyledons</taxon>
        <taxon>Gunneridae</taxon>
        <taxon>Pentapetalae</taxon>
        <taxon>rosids</taxon>
        <taxon>malvids</taxon>
        <taxon>Brassicales</taxon>
        <taxon>Brassicaceae</taxon>
        <taxon>Camelineae</taxon>
        <taxon>Arabidopsis</taxon>
    </lineage>
</organism>